<sequence length="185" mass="20200">MINDIKKDAQERMGKSLEALDRNLASIRTGRAHPSILDSVKVPAWGSDMPLNQVAAITVEDARTLKIVAHDKNLSAAIEKAIMTSDLGLNPSSAGTTIRVPMPALTEETRKGYTKQARGVAEDAKVAVRNVRRDALAELKKLAKAKEISEDEERRAADELQKITDKFIADVDKALEVKEADLMAV</sequence>
<dbReference type="EMBL" id="CP000680">
    <property type="protein sequence ID" value="ABP85804.1"/>
    <property type="molecule type" value="Genomic_DNA"/>
</dbReference>
<dbReference type="SMR" id="A4XWT8"/>
<dbReference type="STRING" id="399739.Pmen_3050"/>
<dbReference type="KEGG" id="pmy:Pmen_3050"/>
<dbReference type="PATRIC" id="fig|399739.8.peg.3096"/>
<dbReference type="eggNOG" id="COG0233">
    <property type="taxonomic scope" value="Bacteria"/>
</dbReference>
<dbReference type="HOGENOM" id="CLU_073981_2_0_6"/>
<dbReference type="OrthoDB" id="9804006at2"/>
<dbReference type="GO" id="GO:0005829">
    <property type="term" value="C:cytosol"/>
    <property type="evidence" value="ECO:0007669"/>
    <property type="project" value="GOC"/>
</dbReference>
<dbReference type="GO" id="GO:0043023">
    <property type="term" value="F:ribosomal large subunit binding"/>
    <property type="evidence" value="ECO:0007669"/>
    <property type="project" value="TreeGrafter"/>
</dbReference>
<dbReference type="GO" id="GO:0002184">
    <property type="term" value="P:cytoplasmic translational termination"/>
    <property type="evidence" value="ECO:0007669"/>
    <property type="project" value="TreeGrafter"/>
</dbReference>
<dbReference type="CDD" id="cd00520">
    <property type="entry name" value="RRF"/>
    <property type="match status" value="1"/>
</dbReference>
<dbReference type="FunFam" id="1.10.132.20:FF:000001">
    <property type="entry name" value="Ribosome-recycling factor"/>
    <property type="match status" value="1"/>
</dbReference>
<dbReference type="FunFam" id="3.30.1360.40:FF:000001">
    <property type="entry name" value="Ribosome-recycling factor"/>
    <property type="match status" value="1"/>
</dbReference>
<dbReference type="Gene3D" id="3.30.1360.40">
    <property type="match status" value="1"/>
</dbReference>
<dbReference type="Gene3D" id="1.10.132.20">
    <property type="entry name" value="Ribosome-recycling factor"/>
    <property type="match status" value="1"/>
</dbReference>
<dbReference type="HAMAP" id="MF_00040">
    <property type="entry name" value="RRF"/>
    <property type="match status" value="1"/>
</dbReference>
<dbReference type="InterPro" id="IPR002661">
    <property type="entry name" value="Ribosome_recyc_fac"/>
</dbReference>
<dbReference type="InterPro" id="IPR023584">
    <property type="entry name" value="Ribosome_recyc_fac_dom"/>
</dbReference>
<dbReference type="InterPro" id="IPR036191">
    <property type="entry name" value="RRF_sf"/>
</dbReference>
<dbReference type="NCBIfam" id="TIGR00496">
    <property type="entry name" value="frr"/>
    <property type="match status" value="1"/>
</dbReference>
<dbReference type="PANTHER" id="PTHR20982:SF3">
    <property type="entry name" value="MITOCHONDRIAL RIBOSOME RECYCLING FACTOR PSEUDO 1"/>
    <property type="match status" value="1"/>
</dbReference>
<dbReference type="PANTHER" id="PTHR20982">
    <property type="entry name" value="RIBOSOME RECYCLING FACTOR"/>
    <property type="match status" value="1"/>
</dbReference>
<dbReference type="Pfam" id="PF01765">
    <property type="entry name" value="RRF"/>
    <property type="match status" value="1"/>
</dbReference>
<dbReference type="SUPFAM" id="SSF55194">
    <property type="entry name" value="Ribosome recycling factor, RRF"/>
    <property type="match status" value="1"/>
</dbReference>
<evidence type="ECO:0000255" key="1">
    <source>
        <dbReference type="HAMAP-Rule" id="MF_00040"/>
    </source>
</evidence>
<protein>
    <recommendedName>
        <fullName evidence="1">Ribosome-recycling factor</fullName>
        <shortName evidence="1">RRF</shortName>
    </recommendedName>
    <alternativeName>
        <fullName evidence="1">Ribosome-releasing factor</fullName>
    </alternativeName>
</protein>
<comment type="function">
    <text evidence="1">Responsible for the release of ribosomes from messenger RNA at the termination of protein biosynthesis. May increase the efficiency of translation by recycling ribosomes from one round of translation to another.</text>
</comment>
<comment type="subcellular location">
    <subcellularLocation>
        <location evidence="1">Cytoplasm</location>
    </subcellularLocation>
</comment>
<comment type="similarity">
    <text evidence="1">Belongs to the RRF family.</text>
</comment>
<name>RRF_ECTM1</name>
<accession>A4XWT8</accession>
<reference key="1">
    <citation type="submission" date="2007-04" db="EMBL/GenBank/DDBJ databases">
        <title>Complete sequence of Pseudomonas mendocina ymp.</title>
        <authorList>
            <consortium name="US DOE Joint Genome Institute"/>
            <person name="Copeland A."/>
            <person name="Lucas S."/>
            <person name="Lapidus A."/>
            <person name="Barry K."/>
            <person name="Glavina del Rio T."/>
            <person name="Dalin E."/>
            <person name="Tice H."/>
            <person name="Pitluck S."/>
            <person name="Kiss H."/>
            <person name="Brettin T."/>
            <person name="Detter J.C."/>
            <person name="Bruce D."/>
            <person name="Han C."/>
            <person name="Schmutz J."/>
            <person name="Larimer F."/>
            <person name="Land M."/>
            <person name="Hauser L."/>
            <person name="Kyrpides N."/>
            <person name="Mikhailova N."/>
            <person name="Hersman L."/>
            <person name="Dubois J."/>
            <person name="Maurice P."/>
            <person name="Richardson P."/>
        </authorList>
    </citation>
    <scope>NUCLEOTIDE SEQUENCE [LARGE SCALE GENOMIC DNA]</scope>
    <source>
        <strain>ymp</strain>
    </source>
</reference>
<proteinExistence type="inferred from homology"/>
<keyword id="KW-0963">Cytoplasm</keyword>
<keyword id="KW-0648">Protein biosynthesis</keyword>
<feature type="chain" id="PRO_1000003233" description="Ribosome-recycling factor">
    <location>
        <begin position="1"/>
        <end position="185"/>
    </location>
</feature>
<gene>
    <name evidence="1" type="primary">frr</name>
    <name type="ordered locus">Pmen_3050</name>
</gene>
<organism>
    <name type="scientific">Ectopseudomonas mendocina (strain ymp)</name>
    <name type="common">Pseudomonas mendocina</name>
    <dbReference type="NCBI Taxonomy" id="399739"/>
    <lineage>
        <taxon>Bacteria</taxon>
        <taxon>Pseudomonadati</taxon>
        <taxon>Pseudomonadota</taxon>
        <taxon>Gammaproteobacteria</taxon>
        <taxon>Pseudomonadales</taxon>
        <taxon>Pseudomonadaceae</taxon>
        <taxon>Ectopseudomonas</taxon>
    </lineage>
</organism>